<sequence length="121" mass="13821">MRHAKRGRKLGRDAAHRNLMLGTMAGQLITHGRIKTTEAKAKELRGVVDRLINIAKRDDLHARRQAVKVLKDKRVVRHLFEEVAPDLDDRTSGYTRILKLGPRQGDGAEQVYLELVNHRVE</sequence>
<reference key="1">
    <citation type="submission" date="2006-06" db="EMBL/GenBank/DDBJ databases">
        <title>Complete sequence of Rubrobacter xylanophilus DSM 9941.</title>
        <authorList>
            <consortium name="US DOE Joint Genome Institute"/>
            <person name="Copeland A."/>
            <person name="Lucas S."/>
            <person name="Lapidus A."/>
            <person name="Barry K."/>
            <person name="Detter J.C."/>
            <person name="Glavina del Rio T."/>
            <person name="Hammon N."/>
            <person name="Israni S."/>
            <person name="Dalin E."/>
            <person name="Tice H."/>
            <person name="Pitluck S."/>
            <person name="Munk A.C."/>
            <person name="Brettin T."/>
            <person name="Bruce D."/>
            <person name="Han C."/>
            <person name="Tapia R."/>
            <person name="Gilna P."/>
            <person name="Schmutz J."/>
            <person name="Larimer F."/>
            <person name="Land M."/>
            <person name="Hauser L."/>
            <person name="Kyrpides N."/>
            <person name="Lykidis A."/>
            <person name="da Costa M.S."/>
            <person name="Rainey F.A."/>
            <person name="Empadinhas N."/>
            <person name="Jolivet E."/>
            <person name="Battista J.R."/>
            <person name="Richardson P."/>
        </authorList>
    </citation>
    <scope>NUCLEOTIDE SEQUENCE [LARGE SCALE GENOMIC DNA]</scope>
    <source>
        <strain>DSM 9941 / JCM 11954 / NBRC 16129 / PRD-1</strain>
    </source>
</reference>
<name>RL17_RUBXD</name>
<organism>
    <name type="scientific">Rubrobacter xylanophilus (strain DSM 9941 / JCM 11954 / NBRC 16129 / PRD-1)</name>
    <dbReference type="NCBI Taxonomy" id="266117"/>
    <lineage>
        <taxon>Bacteria</taxon>
        <taxon>Bacillati</taxon>
        <taxon>Actinomycetota</taxon>
        <taxon>Rubrobacteria</taxon>
        <taxon>Rubrobacterales</taxon>
        <taxon>Rubrobacteraceae</taxon>
        <taxon>Rubrobacter</taxon>
    </lineage>
</organism>
<comment type="subunit">
    <text evidence="1">Part of the 50S ribosomal subunit. Contacts protein L32.</text>
</comment>
<comment type="similarity">
    <text evidence="1">Belongs to the bacterial ribosomal protein bL17 family.</text>
</comment>
<feature type="chain" id="PRO_1000055933" description="Large ribosomal subunit protein bL17">
    <location>
        <begin position="1"/>
        <end position="121"/>
    </location>
</feature>
<proteinExistence type="inferred from homology"/>
<keyword id="KW-1185">Reference proteome</keyword>
<keyword id="KW-0687">Ribonucleoprotein</keyword>
<keyword id="KW-0689">Ribosomal protein</keyword>
<accession>Q1AU57</accession>
<protein>
    <recommendedName>
        <fullName evidence="1">Large ribosomal subunit protein bL17</fullName>
    </recommendedName>
    <alternativeName>
        <fullName evidence="2">50S ribosomal protein L17</fullName>
    </alternativeName>
</protein>
<dbReference type="EMBL" id="CP000386">
    <property type="protein sequence ID" value="ABG05071.1"/>
    <property type="molecule type" value="Genomic_DNA"/>
</dbReference>
<dbReference type="RefSeq" id="WP_011565086.1">
    <property type="nucleotide sequence ID" value="NC_008148.1"/>
</dbReference>
<dbReference type="SMR" id="Q1AU57"/>
<dbReference type="STRING" id="266117.Rxyl_2127"/>
<dbReference type="KEGG" id="rxy:Rxyl_2127"/>
<dbReference type="eggNOG" id="COG0203">
    <property type="taxonomic scope" value="Bacteria"/>
</dbReference>
<dbReference type="HOGENOM" id="CLU_074407_2_2_11"/>
<dbReference type="OrthoDB" id="9809073at2"/>
<dbReference type="PhylomeDB" id="Q1AU57"/>
<dbReference type="Proteomes" id="UP000006637">
    <property type="component" value="Chromosome"/>
</dbReference>
<dbReference type="GO" id="GO:0022625">
    <property type="term" value="C:cytosolic large ribosomal subunit"/>
    <property type="evidence" value="ECO:0007669"/>
    <property type="project" value="TreeGrafter"/>
</dbReference>
<dbReference type="GO" id="GO:0003735">
    <property type="term" value="F:structural constituent of ribosome"/>
    <property type="evidence" value="ECO:0007669"/>
    <property type="project" value="InterPro"/>
</dbReference>
<dbReference type="GO" id="GO:0006412">
    <property type="term" value="P:translation"/>
    <property type="evidence" value="ECO:0007669"/>
    <property type="project" value="UniProtKB-UniRule"/>
</dbReference>
<dbReference type="FunFam" id="3.90.1030.10:FF:000001">
    <property type="entry name" value="50S ribosomal protein L17"/>
    <property type="match status" value="1"/>
</dbReference>
<dbReference type="Gene3D" id="3.90.1030.10">
    <property type="entry name" value="Ribosomal protein L17"/>
    <property type="match status" value="1"/>
</dbReference>
<dbReference type="HAMAP" id="MF_01368">
    <property type="entry name" value="Ribosomal_bL17"/>
    <property type="match status" value="1"/>
</dbReference>
<dbReference type="InterPro" id="IPR000456">
    <property type="entry name" value="Ribosomal_bL17"/>
</dbReference>
<dbReference type="InterPro" id="IPR036373">
    <property type="entry name" value="Ribosomal_bL17_sf"/>
</dbReference>
<dbReference type="NCBIfam" id="TIGR00059">
    <property type="entry name" value="L17"/>
    <property type="match status" value="1"/>
</dbReference>
<dbReference type="PANTHER" id="PTHR14413:SF16">
    <property type="entry name" value="LARGE RIBOSOMAL SUBUNIT PROTEIN BL17M"/>
    <property type="match status" value="1"/>
</dbReference>
<dbReference type="PANTHER" id="PTHR14413">
    <property type="entry name" value="RIBOSOMAL PROTEIN L17"/>
    <property type="match status" value="1"/>
</dbReference>
<dbReference type="Pfam" id="PF01196">
    <property type="entry name" value="Ribosomal_L17"/>
    <property type="match status" value="1"/>
</dbReference>
<dbReference type="SUPFAM" id="SSF64263">
    <property type="entry name" value="Prokaryotic ribosomal protein L17"/>
    <property type="match status" value="1"/>
</dbReference>
<evidence type="ECO:0000255" key="1">
    <source>
        <dbReference type="HAMAP-Rule" id="MF_01368"/>
    </source>
</evidence>
<evidence type="ECO:0000305" key="2"/>
<gene>
    <name evidence="1" type="primary">rplQ</name>
    <name type="ordered locus">Rxyl_2127</name>
</gene>